<protein>
    <recommendedName>
        <fullName>Unknown protein from spot 146 of 2D-PAGE of etiolated coleoptile</fullName>
    </recommendedName>
</protein>
<reference key="1">
    <citation type="journal article" date="1996" name="Theor. Appl. Genet.">
        <title>The maize two dimensional gel protein database: towards an integrated genome analysis program.</title>
        <authorList>
            <person name="Touzet P."/>
            <person name="Riccardi F."/>
            <person name="Morin C."/>
            <person name="Damerval C."/>
            <person name="Huet J.-C."/>
            <person name="Pernollet J.-C."/>
            <person name="Zivy M."/>
            <person name="de Vienne D."/>
        </authorList>
        <dbReference type="AGRICOLA" id="IND20551642"/>
    </citation>
    <scope>PROTEIN SEQUENCE</scope>
    <source>
        <tissue>Coleoptile</tissue>
    </source>
</reference>
<feature type="chain" id="PRO_0000055501" description="Unknown protein from spot 146 of 2D-PAGE of etiolated coleoptile">
    <location>
        <begin position="1" status="less than"/>
        <end position="18" status="greater than"/>
    </location>
</feature>
<feature type="non-consecutive residues" evidence="1">
    <location>
        <begin position="9"/>
        <end position="10"/>
    </location>
</feature>
<feature type="non-terminal residue">
    <location>
        <position position="1"/>
    </location>
</feature>
<feature type="non-terminal residue">
    <location>
        <position position="18"/>
    </location>
</feature>
<comment type="miscellaneous">
    <text>On the 2D-gel the determined pI of this unknown protein is: 5.1, its MW is: 29.3 kDa.</text>
</comment>
<comment type="caution">
    <text evidence="1">The order of the peptides shown is unknown.</text>
</comment>
<dbReference type="MaizeGDB" id="123924"/>
<dbReference type="InParanoid" id="P80609"/>
<dbReference type="Proteomes" id="UP000007305">
    <property type="component" value="Unplaced"/>
</dbReference>
<accession>P80609</accession>
<evidence type="ECO:0000305" key="1"/>
<organism>
    <name type="scientific">Zea mays</name>
    <name type="common">Maize</name>
    <dbReference type="NCBI Taxonomy" id="4577"/>
    <lineage>
        <taxon>Eukaryota</taxon>
        <taxon>Viridiplantae</taxon>
        <taxon>Streptophyta</taxon>
        <taxon>Embryophyta</taxon>
        <taxon>Tracheophyta</taxon>
        <taxon>Spermatophyta</taxon>
        <taxon>Magnoliopsida</taxon>
        <taxon>Liliopsida</taxon>
        <taxon>Poales</taxon>
        <taxon>Poaceae</taxon>
        <taxon>PACMAD clade</taxon>
        <taxon>Panicoideae</taxon>
        <taxon>Andropogonodae</taxon>
        <taxon>Andropogoneae</taxon>
        <taxon>Tripsacinae</taxon>
        <taxon>Zea</taxon>
    </lineage>
</organism>
<name>UC03_MAIZE</name>
<keyword id="KW-0903">Direct protein sequencing</keyword>
<keyword id="KW-1185">Reference proteome</keyword>
<sequence>AAVSLLQNKLAYDGFLSK</sequence>
<proteinExistence type="evidence at protein level"/>